<protein>
    <recommendedName>
        <fullName evidence="1">Ribosome maturation factor RimM</fullName>
    </recommendedName>
</protein>
<reference key="1">
    <citation type="submission" date="2005-07" db="EMBL/GenBank/DDBJ databases">
        <title>Complete sequence of Synechococcus sp. CC9605.</title>
        <authorList>
            <consortium name="US DOE Joint Genome Institute"/>
            <person name="Copeland A."/>
            <person name="Lucas S."/>
            <person name="Lapidus A."/>
            <person name="Barry K."/>
            <person name="Detter J.C."/>
            <person name="Glavina T."/>
            <person name="Hammon N."/>
            <person name="Israni S."/>
            <person name="Pitluck S."/>
            <person name="Schmutz J."/>
            <person name="Martinez M."/>
            <person name="Larimer F."/>
            <person name="Land M."/>
            <person name="Kyrpides N."/>
            <person name="Ivanova N."/>
            <person name="Richardson P."/>
        </authorList>
    </citation>
    <scope>NUCLEOTIDE SEQUENCE [LARGE SCALE GENOMIC DNA]</scope>
    <source>
        <strain>CC9605</strain>
    </source>
</reference>
<feature type="chain" id="PRO_0000244176" description="Ribosome maturation factor RimM">
    <location>
        <begin position="1"/>
        <end position="177"/>
    </location>
</feature>
<feature type="domain" description="PRC barrel" evidence="1">
    <location>
        <begin position="101"/>
        <end position="174"/>
    </location>
</feature>
<dbReference type="EMBL" id="CP000110">
    <property type="protein sequence ID" value="ABB33906.1"/>
    <property type="molecule type" value="Genomic_DNA"/>
</dbReference>
<dbReference type="RefSeq" id="WP_011363165.1">
    <property type="nucleotide sequence ID" value="NC_007516.1"/>
</dbReference>
<dbReference type="SMR" id="Q3ANC6"/>
<dbReference type="STRING" id="110662.Syncc9605_0130"/>
<dbReference type="KEGG" id="syd:Syncc9605_0130"/>
<dbReference type="eggNOG" id="COG0806">
    <property type="taxonomic scope" value="Bacteria"/>
</dbReference>
<dbReference type="HOGENOM" id="CLU_077636_3_0_3"/>
<dbReference type="OrthoDB" id="9810331at2"/>
<dbReference type="GO" id="GO:0005737">
    <property type="term" value="C:cytoplasm"/>
    <property type="evidence" value="ECO:0007669"/>
    <property type="project" value="UniProtKB-SubCell"/>
</dbReference>
<dbReference type="GO" id="GO:0005840">
    <property type="term" value="C:ribosome"/>
    <property type="evidence" value="ECO:0007669"/>
    <property type="project" value="InterPro"/>
</dbReference>
<dbReference type="GO" id="GO:0043022">
    <property type="term" value="F:ribosome binding"/>
    <property type="evidence" value="ECO:0007669"/>
    <property type="project" value="InterPro"/>
</dbReference>
<dbReference type="GO" id="GO:0042274">
    <property type="term" value="P:ribosomal small subunit biogenesis"/>
    <property type="evidence" value="ECO:0007669"/>
    <property type="project" value="UniProtKB-UniRule"/>
</dbReference>
<dbReference type="GO" id="GO:0006364">
    <property type="term" value="P:rRNA processing"/>
    <property type="evidence" value="ECO:0007669"/>
    <property type="project" value="UniProtKB-UniRule"/>
</dbReference>
<dbReference type="Gene3D" id="2.30.30.240">
    <property type="entry name" value="PRC-barrel domain"/>
    <property type="match status" value="1"/>
</dbReference>
<dbReference type="Gene3D" id="2.40.30.60">
    <property type="entry name" value="RimM"/>
    <property type="match status" value="1"/>
</dbReference>
<dbReference type="HAMAP" id="MF_00014">
    <property type="entry name" value="Ribosome_mat_RimM"/>
    <property type="match status" value="1"/>
</dbReference>
<dbReference type="InterPro" id="IPR011033">
    <property type="entry name" value="PRC_barrel-like_sf"/>
</dbReference>
<dbReference type="InterPro" id="IPR056792">
    <property type="entry name" value="PRC_RimM"/>
</dbReference>
<dbReference type="InterPro" id="IPR011961">
    <property type="entry name" value="RimM"/>
</dbReference>
<dbReference type="InterPro" id="IPR002676">
    <property type="entry name" value="RimM_N"/>
</dbReference>
<dbReference type="InterPro" id="IPR036976">
    <property type="entry name" value="RimM_N_sf"/>
</dbReference>
<dbReference type="InterPro" id="IPR009000">
    <property type="entry name" value="Transl_B-barrel_sf"/>
</dbReference>
<dbReference type="NCBIfam" id="TIGR02273">
    <property type="entry name" value="16S_RimM"/>
    <property type="match status" value="1"/>
</dbReference>
<dbReference type="PANTHER" id="PTHR33692">
    <property type="entry name" value="RIBOSOME MATURATION FACTOR RIMM"/>
    <property type="match status" value="1"/>
</dbReference>
<dbReference type="PANTHER" id="PTHR33692:SF1">
    <property type="entry name" value="RIBOSOME MATURATION FACTOR RIMM"/>
    <property type="match status" value="1"/>
</dbReference>
<dbReference type="Pfam" id="PF24986">
    <property type="entry name" value="PRC_RimM"/>
    <property type="match status" value="1"/>
</dbReference>
<dbReference type="Pfam" id="PF01782">
    <property type="entry name" value="RimM"/>
    <property type="match status" value="1"/>
</dbReference>
<dbReference type="SUPFAM" id="SSF50346">
    <property type="entry name" value="PRC-barrel domain"/>
    <property type="match status" value="1"/>
</dbReference>
<dbReference type="SUPFAM" id="SSF50447">
    <property type="entry name" value="Translation proteins"/>
    <property type="match status" value="1"/>
</dbReference>
<proteinExistence type="inferred from homology"/>
<accession>Q3ANC6</accession>
<evidence type="ECO:0000255" key="1">
    <source>
        <dbReference type="HAMAP-Rule" id="MF_00014"/>
    </source>
</evidence>
<name>RIMM_SYNSC</name>
<sequence>MAESNDWLSVGKIVAVQGLLGELRVNPASDFPERFTVPGPRWLRSRQGGEPSEIQLKKGRQLPGKSLFVVRFEGVDNRSAAETLVGMELLVPADDRPELAEGEFHLLDLVGLKARLTADGPAIGTVSDLISGGNDLLEITTSDGRKLLIPFVEAIVPEVKLKAGWLLLTPPPGLLEL</sequence>
<gene>
    <name evidence="1" type="primary">rimM</name>
    <name type="ordered locus">Syncc9605_0130</name>
</gene>
<keyword id="KW-0143">Chaperone</keyword>
<keyword id="KW-0963">Cytoplasm</keyword>
<keyword id="KW-0690">Ribosome biogenesis</keyword>
<keyword id="KW-0698">rRNA processing</keyword>
<comment type="function">
    <text evidence="1">An accessory protein needed during the final step in the assembly of 30S ribosomal subunit, possibly for assembly of the head region. Essential for efficient processing of 16S rRNA. May be needed both before and after RbfA during the maturation of 16S rRNA. It has affinity for free ribosomal 30S subunits but not for 70S ribosomes.</text>
</comment>
<comment type="subunit">
    <text evidence="1">Binds ribosomal protein uS19.</text>
</comment>
<comment type="subcellular location">
    <subcellularLocation>
        <location evidence="1">Cytoplasm</location>
    </subcellularLocation>
</comment>
<comment type="domain">
    <text evidence="1">The PRC barrel domain binds ribosomal protein uS19.</text>
</comment>
<comment type="similarity">
    <text evidence="1">Belongs to the RimM family.</text>
</comment>
<organism>
    <name type="scientific">Synechococcus sp. (strain CC9605)</name>
    <dbReference type="NCBI Taxonomy" id="110662"/>
    <lineage>
        <taxon>Bacteria</taxon>
        <taxon>Bacillati</taxon>
        <taxon>Cyanobacteriota</taxon>
        <taxon>Cyanophyceae</taxon>
        <taxon>Synechococcales</taxon>
        <taxon>Synechococcaceae</taxon>
        <taxon>Synechococcus</taxon>
    </lineage>
</organism>